<protein>
    <recommendedName>
        <fullName evidence="1">NADH-quinone oxidoreductase subunit H 1</fullName>
        <ecNumber evidence="1">7.1.1.-</ecNumber>
    </recommendedName>
    <alternativeName>
        <fullName evidence="1">NADH dehydrogenase I subunit H 1</fullName>
    </alternativeName>
    <alternativeName>
        <fullName evidence="1">NDH-1 subunit H 1</fullName>
    </alternativeName>
</protein>
<sequence>MGEFMNSGMGIILTIAAQGLLVIAFVMISLLFLVYGDRKIWAAVQLRRGPNVVGAFGLLQTVADAAKYIFKEVVVPAGVDRPVFFLAPLISFVLAVLAWAVIPFSPGWVLSDINVAILFVFAASSLEVYGVIMGGWASNSKYPFLGSLRSAAQMISYEVSLGLIIIGIIISTGSMNLSHIVEAQDGAFGLFNWYWLPHLPMVALFFISALAETNRPPFDLPEAESELVAGFQVEYSSTPFLLFMAGEYIAIFLMCALMSLLFFGGWLSPIPGLPDGVFWMVAKMAFFFFLFAMVKAIVPRYRYDQLMRIGWKVFLPFSLGWVVLVAFLAKFEVFGGFWARWAMGG</sequence>
<name>NUOH1_CERS4</name>
<dbReference type="EC" id="7.1.1.-" evidence="1"/>
<dbReference type="EMBL" id="CP000143">
    <property type="protein sequence ID" value="ABA78683.1"/>
    <property type="molecule type" value="Genomic_DNA"/>
</dbReference>
<dbReference type="RefSeq" id="YP_352584.1">
    <property type="nucleotide sequence ID" value="NC_007493.2"/>
</dbReference>
<dbReference type="SMR" id="Q3J3F1"/>
<dbReference type="STRING" id="272943.RSP_2522"/>
<dbReference type="EnsemblBacteria" id="ABA78683">
    <property type="protein sequence ID" value="ABA78683"/>
    <property type="gene ID" value="RSP_2522"/>
</dbReference>
<dbReference type="KEGG" id="rsp:RSP_2522"/>
<dbReference type="PATRIC" id="fig|272943.9.peg.1443"/>
<dbReference type="eggNOG" id="COG1005">
    <property type="taxonomic scope" value="Bacteria"/>
</dbReference>
<dbReference type="OrthoDB" id="9803734at2"/>
<dbReference type="PhylomeDB" id="Q3J3F1"/>
<dbReference type="Proteomes" id="UP000002703">
    <property type="component" value="Chromosome 1"/>
</dbReference>
<dbReference type="GO" id="GO:0005886">
    <property type="term" value="C:plasma membrane"/>
    <property type="evidence" value="ECO:0007669"/>
    <property type="project" value="UniProtKB-SubCell"/>
</dbReference>
<dbReference type="GO" id="GO:0003954">
    <property type="term" value="F:NADH dehydrogenase activity"/>
    <property type="evidence" value="ECO:0007669"/>
    <property type="project" value="TreeGrafter"/>
</dbReference>
<dbReference type="GO" id="GO:0016655">
    <property type="term" value="F:oxidoreductase activity, acting on NAD(P)H, quinone or similar compound as acceptor"/>
    <property type="evidence" value="ECO:0007669"/>
    <property type="project" value="UniProtKB-UniRule"/>
</dbReference>
<dbReference type="GO" id="GO:0048038">
    <property type="term" value="F:quinone binding"/>
    <property type="evidence" value="ECO:0007669"/>
    <property type="project" value="UniProtKB-KW"/>
</dbReference>
<dbReference type="GO" id="GO:0009060">
    <property type="term" value="P:aerobic respiration"/>
    <property type="evidence" value="ECO:0007669"/>
    <property type="project" value="TreeGrafter"/>
</dbReference>
<dbReference type="HAMAP" id="MF_01350">
    <property type="entry name" value="NDH1_NuoH"/>
    <property type="match status" value="1"/>
</dbReference>
<dbReference type="InterPro" id="IPR001694">
    <property type="entry name" value="NADH_UbQ_OxRdtase_su1/FPO"/>
</dbReference>
<dbReference type="InterPro" id="IPR018086">
    <property type="entry name" value="NADH_UbQ_OxRdtase_su1_CS"/>
</dbReference>
<dbReference type="NCBIfam" id="NF004741">
    <property type="entry name" value="PRK06076.1-2"/>
    <property type="match status" value="1"/>
</dbReference>
<dbReference type="NCBIfam" id="NF004745">
    <property type="entry name" value="PRK06076.1-6"/>
    <property type="match status" value="1"/>
</dbReference>
<dbReference type="PANTHER" id="PTHR11432">
    <property type="entry name" value="NADH DEHYDROGENASE SUBUNIT 1"/>
    <property type="match status" value="1"/>
</dbReference>
<dbReference type="PANTHER" id="PTHR11432:SF3">
    <property type="entry name" value="NADH-UBIQUINONE OXIDOREDUCTASE CHAIN 1"/>
    <property type="match status" value="1"/>
</dbReference>
<dbReference type="Pfam" id="PF00146">
    <property type="entry name" value="NADHdh"/>
    <property type="match status" value="1"/>
</dbReference>
<dbReference type="PROSITE" id="PS00667">
    <property type="entry name" value="COMPLEX1_ND1_1"/>
    <property type="match status" value="1"/>
</dbReference>
<dbReference type="PROSITE" id="PS00668">
    <property type="entry name" value="COMPLEX1_ND1_2"/>
    <property type="match status" value="1"/>
</dbReference>
<feature type="chain" id="PRO_0000244939" description="NADH-quinone oxidoreductase subunit H 1">
    <location>
        <begin position="1"/>
        <end position="345"/>
    </location>
</feature>
<feature type="transmembrane region" description="Helical" evidence="1">
    <location>
        <begin position="11"/>
        <end position="31"/>
    </location>
</feature>
<feature type="transmembrane region" description="Helical" evidence="1">
    <location>
        <begin position="50"/>
        <end position="70"/>
    </location>
</feature>
<feature type="transmembrane region" description="Helical" evidence="1">
    <location>
        <begin position="84"/>
        <end position="104"/>
    </location>
</feature>
<feature type="transmembrane region" description="Helical" evidence="1">
    <location>
        <begin position="115"/>
        <end position="135"/>
    </location>
</feature>
<feature type="transmembrane region" description="Helical" evidence="1">
    <location>
        <begin position="161"/>
        <end position="181"/>
    </location>
</feature>
<feature type="transmembrane region" description="Helical" evidence="1">
    <location>
        <begin position="187"/>
        <end position="207"/>
    </location>
</feature>
<feature type="transmembrane region" description="Helical" evidence="1">
    <location>
        <begin position="248"/>
        <end position="268"/>
    </location>
</feature>
<feature type="transmembrane region" description="Helical" evidence="1">
    <location>
        <begin position="277"/>
        <end position="297"/>
    </location>
</feature>
<feature type="transmembrane region" description="Helical" evidence="1">
    <location>
        <begin position="309"/>
        <end position="329"/>
    </location>
</feature>
<evidence type="ECO:0000255" key="1">
    <source>
        <dbReference type="HAMAP-Rule" id="MF_01350"/>
    </source>
</evidence>
<proteinExistence type="inferred from homology"/>
<keyword id="KW-0997">Cell inner membrane</keyword>
<keyword id="KW-1003">Cell membrane</keyword>
<keyword id="KW-0472">Membrane</keyword>
<keyword id="KW-0520">NAD</keyword>
<keyword id="KW-0874">Quinone</keyword>
<keyword id="KW-1185">Reference proteome</keyword>
<keyword id="KW-1278">Translocase</keyword>
<keyword id="KW-0812">Transmembrane</keyword>
<keyword id="KW-1133">Transmembrane helix</keyword>
<keyword id="KW-0830">Ubiquinone</keyword>
<gene>
    <name evidence="1" type="primary">nuoH1</name>
    <name type="ordered locus">RHOS4_11150</name>
    <name type="ORF">RSP_2522</name>
</gene>
<organism>
    <name type="scientific">Cereibacter sphaeroides (strain ATCC 17023 / DSM 158 / JCM 6121 / CCUG 31486 / LMG 2827 / NBRC 12203 / NCIMB 8253 / ATH 2.4.1.)</name>
    <name type="common">Rhodobacter sphaeroides</name>
    <dbReference type="NCBI Taxonomy" id="272943"/>
    <lineage>
        <taxon>Bacteria</taxon>
        <taxon>Pseudomonadati</taxon>
        <taxon>Pseudomonadota</taxon>
        <taxon>Alphaproteobacteria</taxon>
        <taxon>Rhodobacterales</taxon>
        <taxon>Paracoccaceae</taxon>
        <taxon>Cereibacter</taxon>
    </lineage>
</organism>
<comment type="function">
    <text evidence="1">NDH-1 shuttles electrons from NADH, via FMN and iron-sulfur (Fe-S) centers, to quinones in the respiratory chain. The immediate electron acceptor for the enzyme in this species is believed to be ubiquinone. Couples the redox reaction to proton translocation (for every two electrons transferred, four hydrogen ions are translocated across the cytoplasmic membrane), and thus conserves the redox energy in a proton gradient. This subunit may bind ubiquinone.</text>
</comment>
<comment type="catalytic activity">
    <reaction evidence="1">
        <text>a quinone + NADH + 5 H(+)(in) = a quinol + NAD(+) + 4 H(+)(out)</text>
        <dbReference type="Rhea" id="RHEA:57888"/>
        <dbReference type="ChEBI" id="CHEBI:15378"/>
        <dbReference type="ChEBI" id="CHEBI:24646"/>
        <dbReference type="ChEBI" id="CHEBI:57540"/>
        <dbReference type="ChEBI" id="CHEBI:57945"/>
        <dbReference type="ChEBI" id="CHEBI:132124"/>
    </reaction>
</comment>
<comment type="subunit">
    <text evidence="1">NDH-1 is composed of 14 different subunits. Subunits NuoA, H, J, K, L, M, N constitute the membrane sector of the complex.</text>
</comment>
<comment type="subcellular location">
    <subcellularLocation>
        <location evidence="1">Cell inner membrane</location>
        <topology evidence="1">Multi-pass membrane protein</topology>
    </subcellularLocation>
</comment>
<comment type="similarity">
    <text evidence="1">Belongs to the complex I subunit 1 family.</text>
</comment>
<accession>Q3J3F1</accession>
<reference key="1">
    <citation type="submission" date="2005-09" db="EMBL/GenBank/DDBJ databases">
        <title>Complete sequence of chromosome 1 of Rhodobacter sphaeroides 2.4.1.</title>
        <authorList>
            <person name="Copeland A."/>
            <person name="Lucas S."/>
            <person name="Lapidus A."/>
            <person name="Barry K."/>
            <person name="Detter J.C."/>
            <person name="Glavina T."/>
            <person name="Hammon N."/>
            <person name="Israni S."/>
            <person name="Pitluck S."/>
            <person name="Richardson P."/>
            <person name="Mackenzie C."/>
            <person name="Choudhary M."/>
            <person name="Larimer F."/>
            <person name="Hauser L.J."/>
            <person name="Land M."/>
            <person name="Donohue T.J."/>
            <person name="Kaplan S."/>
        </authorList>
    </citation>
    <scope>NUCLEOTIDE SEQUENCE [LARGE SCALE GENOMIC DNA]</scope>
    <source>
        <strain>ATCC 17023 / DSM 158 / JCM 6121 / CCUG 31486 / LMG 2827 / NBRC 12203 / NCIMB 8253 / ATH 2.4.1.</strain>
    </source>
</reference>